<proteinExistence type="inferred from homology"/>
<evidence type="ECO:0000255" key="1">
    <source>
        <dbReference type="HAMAP-Rule" id="MF_01008"/>
    </source>
</evidence>
<evidence type="ECO:0000255" key="2">
    <source>
        <dbReference type="PROSITE-ProRule" id="PRU01076"/>
    </source>
</evidence>
<protein>
    <recommendedName>
        <fullName>Transcriptional regulator MraZ</fullName>
    </recommendedName>
</protein>
<keyword id="KW-0963">Cytoplasm</keyword>
<keyword id="KW-0238">DNA-binding</keyword>
<keyword id="KW-0677">Repeat</keyword>
<keyword id="KW-0804">Transcription</keyword>
<keyword id="KW-0805">Transcription regulation</keyword>
<feature type="chain" id="PRO_1000084017" description="Transcriptional regulator MraZ">
    <location>
        <begin position="1"/>
        <end position="142"/>
    </location>
</feature>
<feature type="domain" description="SpoVT-AbrB 1" evidence="2">
    <location>
        <begin position="5"/>
        <end position="47"/>
    </location>
</feature>
<feature type="domain" description="SpoVT-AbrB 2" evidence="2">
    <location>
        <begin position="76"/>
        <end position="119"/>
    </location>
</feature>
<organism>
    <name type="scientific">Salinispora arenicola (strain CNS-205)</name>
    <dbReference type="NCBI Taxonomy" id="391037"/>
    <lineage>
        <taxon>Bacteria</taxon>
        <taxon>Bacillati</taxon>
        <taxon>Actinomycetota</taxon>
        <taxon>Actinomycetes</taxon>
        <taxon>Micromonosporales</taxon>
        <taxon>Micromonosporaceae</taxon>
        <taxon>Salinispora</taxon>
    </lineage>
</organism>
<comment type="subunit">
    <text evidence="1">Forms oligomers.</text>
</comment>
<comment type="subcellular location">
    <subcellularLocation>
        <location evidence="1">Cytoplasm</location>
        <location evidence="1">Nucleoid</location>
    </subcellularLocation>
</comment>
<comment type="similarity">
    <text evidence="1">Belongs to the MraZ family.</text>
</comment>
<name>MRAZ_SALAI</name>
<sequence>MFLGTHTPRLDDKGRLILPAKFRDELAGGVVITKGQERCLYVFPAPEFQRIADQLRAQPMTHKAARAYSRVFFASAHDEVPDKQGRVTIPGHLRDYAALDRDLVVIGAHTRVEIWDRVAWESYLAESEDDFADIEEGVLPGL</sequence>
<reference key="1">
    <citation type="submission" date="2007-10" db="EMBL/GenBank/DDBJ databases">
        <title>Complete sequence of Salinispora arenicola CNS-205.</title>
        <authorList>
            <consortium name="US DOE Joint Genome Institute"/>
            <person name="Copeland A."/>
            <person name="Lucas S."/>
            <person name="Lapidus A."/>
            <person name="Barry K."/>
            <person name="Glavina del Rio T."/>
            <person name="Dalin E."/>
            <person name="Tice H."/>
            <person name="Pitluck S."/>
            <person name="Foster B."/>
            <person name="Schmutz J."/>
            <person name="Larimer F."/>
            <person name="Land M."/>
            <person name="Hauser L."/>
            <person name="Kyrpides N."/>
            <person name="Ivanova N."/>
            <person name="Jensen P.R."/>
            <person name="Moore B.S."/>
            <person name="Penn K."/>
            <person name="Jenkins C."/>
            <person name="Udwary D."/>
            <person name="Xiang L."/>
            <person name="Gontang E."/>
            <person name="Richardson P."/>
        </authorList>
    </citation>
    <scope>NUCLEOTIDE SEQUENCE [LARGE SCALE GENOMIC DNA]</scope>
    <source>
        <strain>CNS-205</strain>
    </source>
</reference>
<accession>A8LX89</accession>
<dbReference type="EMBL" id="CP000850">
    <property type="protein sequence ID" value="ABV99249.1"/>
    <property type="molecule type" value="Genomic_DNA"/>
</dbReference>
<dbReference type="SMR" id="A8LX89"/>
<dbReference type="STRING" id="391037.Sare_3447"/>
<dbReference type="KEGG" id="saq:Sare_3447"/>
<dbReference type="PATRIC" id="fig|391037.6.peg.3475"/>
<dbReference type="eggNOG" id="COG2001">
    <property type="taxonomic scope" value="Bacteria"/>
</dbReference>
<dbReference type="HOGENOM" id="CLU_107907_0_5_11"/>
<dbReference type="OrthoDB" id="9807753at2"/>
<dbReference type="GO" id="GO:0005737">
    <property type="term" value="C:cytoplasm"/>
    <property type="evidence" value="ECO:0007669"/>
    <property type="project" value="UniProtKB-UniRule"/>
</dbReference>
<dbReference type="GO" id="GO:0009295">
    <property type="term" value="C:nucleoid"/>
    <property type="evidence" value="ECO:0007669"/>
    <property type="project" value="UniProtKB-SubCell"/>
</dbReference>
<dbReference type="GO" id="GO:0003700">
    <property type="term" value="F:DNA-binding transcription factor activity"/>
    <property type="evidence" value="ECO:0007669"/>
    <property type="project" value="UniProtKB-UniRule"/>
</dbReference>
<dbReference type="GO" id="GO:0000976">
    <property type="term" value="F:transcription cis-regulatory region binding"/>
    <property type="evidence" value="ECO:0007669"/>
    <property type="project" value="TreeGrafter"/>
</dbReference>
<dbReference type="GO" id="GO:2000143">
    <property type="term" value="P:negative regulation of DNA-templated transcription initiation"/>
    <property type="evidence" value="ECO:0007669"/>
    <property type="project" value="TreeGrafter"/>
</dbReference>
<dbReference type="CDD" id="cd16321">
    <property type="entry name" value="MraZ_C"/>
    <property type="match status" value="1"/>
</dbReference>
<dbReference type="CDD" id="cd16320">
    <property type="entry name" value="MraZ_N"/>
    <property type="match status" value="1"/>
</dbReference>
<dbReference type="Gene3D" id="3.40.1550.20">
    <property type="entry name" value="Transcriptional regulator MraZ domain"/>
    <property type="match status" value="1"/>
</dbReference>
<dbReference type="HAMAP" id="MF_01008">
    <property type="entry name" value="MraZ"/>
    <property type="match status" value="1"/>
</dbReference>
<dbReference type="InterPro" id="IPR003444">
    <property type="entry name" value="MraZ"/>
</dbReference>
<dbReference type="InterPro" id="IPR035644">
    <property type="entry name" value="MraZ_C"/>
</dbReference>
<dbReference type="InterPro" id="IPR020603">
    <property type="entry name" value="MraZ_dom"/>
</dbReference>
<dbReference type="InterPro" id="IPR035642">
    <property type="entry name" value="MraZ_N"/>
</dbReference>
<dbReference type="InterPro" id="IPR038619">
    <property type="entry name" value="MraZ_sf"/>
</dbReference>
<dbReference type="InterPro" id="IPR007159">
    <property type="entry name" value="SpoVT-AbrB_dom"/>
</dbReference>
<dbReference type="InterPro" id="IPR037914">
    <property type="entry name" value="SpoVT-AbrB_sf"/>
</dbReference>
<dbReference type="NCBIfam" id="TIGR00242">
    <property type="entry name" value="division/cell wall cluster transcriptional repressor MraZ"/>
    <property type="match status" value="1"/>
</dbReference>
<dbReference type="PANTHER" id="PTHR34701">
    <property type="entry name" value="TRANSCRIPTIONAL REGULATOR MRAZ"/>
    <property type="match status" value="1"/>
</dbReference>
<dbReference type="PANTHER" id="PTHR34701:SF1">
    <property type="entry name" value="TRANSCRIPTIONAL REGULATOR MRAZ"/>
    <property type="match status" value="1"/>
</dbReference>
<dbReference type="Pfam" id="PF02381">
    <property type="entry name" value="MraZ"/>
    <property type="match status" value="2"/>
</dbReference>
<dbReference type="SUPFAM" id="SSF89447">
    <property type="entry name" value="AbrB/MazE/MraZ-like"/>
    <property type="match status" value="1"/>
</dbReference>
<dbReference type="PROSITE" id="PS51740">
    <property type="entry name" value="SPOVT_ABRB"/>
    <property type="match status" value="2"/>
</dbReference>
<gene>
    <name evidence="1" type="primary">mraZ</name>
    <name type="ordered locus">Sare_3447</name>
</gene>